<name>ATPE_STAA3</name>
<reference key="1">
    <citation type="journal article" date="2006" name="Lancet">
        <title>Complete genome sequence of USA300, an epidemic clone of community-acquired meticillin-resistant Staphylococcus aureus.</title>
        <authorList>
            <person name="Diep B.A."/>
            <person name="Gill S.R."/>
            <person name="Chang R.F."/>
            <person name="Phan T.H."/>
            <person name="Chen J.H."/>
            <person name="Davidson M.G."/>
            <person name="Lin F."/>
            <person name="Lin J."/>
            <person name="Carleton H.A."/>
            <person name="Mongodin E.F."/>
            <person name="Sensabaugh G.F."/>
            <person name="Perdreau-Remington F."/>
        </authorList>
    </citation>
    <scope>NUCLEOTIDE SEQUENCE [LARGE SCALE GENOMIC DNA]</scope>
    <source>
        <strain>USA300</strain>
    </source>
</reference>
<evidence type="ECO:0000255" key="1">
    <source>
        <dbReference type="HAMAP-Rule" id="MF_00530"/>
    </source>
</evidence>
<comment type="function">
    <text evidence="1">Produces ATP from ADP in the presence of a proton gradient across the membrane.</text>
</comment>
<comment type="subunit">
    <text>F-type ATPases have 2 components, CF(1) - the catalytic core - and CF(0) - the membrane proton channel. CF(1) has five subunits: alpha(3), beta(3), gamma(1), delta(1), epsilon(1). CF(0) has three main subunits: a, b and c.</text>
</comment>
<comment type="subcellular location">
    <subcellularLocation>
        <location evidence="1">Cell membrane</location>
        <topology evidence="1">Peripheral membrane protein</topology>
    </subcellularLocation>
</comment>
<comment type="similarity">
    <text evidence="1">Belongs to the ATPase epsilon chain family.</text>
</comment>
<accession>Q2FF25</accession>
<sequence>MNTLNLDIVTPNGSVYNRDNVELVVMQTTAGEIGVMSGHIPTVAALKTGFVKVKFHDGTEYIAVSDGFVEVRKDKVSIIVQTAETAREIDVERAKLAKARAESHLENDDDNTDIHRAERALERANNRLRVAELK</sequence>
<protein>
    <recommendedName>
        <fullName evidence="1">ATP synthase epsilon chain</fullName>
    </recommendedName>
    <alternativeName>
        <fullName evidence="1">ATP synthase F1 sector epsilon subunit</fullName>
    </alternativeName>
    <alternativeName>
        <fullName evidence="1">F-ATPase epsilon subunit</fullName>
    </alternativeName>
</protein>
<gene>
    <name evidence="1" type="primary">atpC</name>
    <name type="ordered locus">SAUSA300_2057</name>
</gene>
<proteinExistence type="inferred from homology"/>
<feature type="chain" id="PRO_0000265900" description="ATP synthase epsilon chain">
    <location>
        <begin position="1"/>
        <end position="134"/>
    </location>
</feature>
<organism>
    <name type="scientific">Staphylococcus aureus (strain USA300)</name>
    <dbReference type="NCBI Taxonomy" id="367830"/>
    <lineage>
        <taxon>Bacteria</taxon>
        <taxon>Bacillati</taxon>
        <taxon>Bacillota</taxon>
        <taxon>Bacilli</taxon>
        <taxon>Bacillales</taxon>
        <taxon>Staphylococcaceae</taxon>
        <taxon>Staphylococcus</taxon>
    </lineage>
</organism>
<keyword id="KW-0066">ATP synthesis</keyword>
<keyword id="KW-1003">Cell membrane</keyword>
<keyword id="KW-0139">CF(1)</keyword>
<keyword id="KW-0375">Hydrogen ion transport</keyword>
<keyword id="KW-0406">Ion transport</keyword>
<keyword id="KW-0472">Membrane</keyword>
<keyword id="KW-0813">Transport</keyword>
<dbReference type="EMBL" id="CP000255">
    <property type="protein sequence ID" value="ABD20802.1"/>
    <property type="molecule type" value="Genomic_DNA"/>
</dbReference>
<dbReference type="RefSeq" id="WP_001094394.1">
    <property type="nucleotide sequence ID" value="NZ_CP027476.1"/>
</dbReference>
<dbReference type="SMR" id="Q2FF25"/>
<dbReference type="KEGG" id="saa:SAUSA300_2057"/>
<dbReference type="HOGENOM" id="CLU_084338_1_3_9"/>
<dbReference type="OMA" id="MTVHCDI"/>
<dbReference type="Proteomes" id="UP000001939">
    <property type="component" value="Chromosome"/>
</dbReference>
<dbReference type="GO" id="GO:0005886">
    <property type="term" value="C:plasma membrane"/>
    <property type="evidence" value="ECO:0007669"/>
    <property type="project" value="UniProtKB-SubCell"/>
</dbReference>
<dbReference type="GO" id="GO:0045259">
    <property type="term" value="C:proton-transporting ATP synthase complex"/>
    <property type="evidence" value="ECO:0007669"/>
    <property type="project" value="UniProtKB-KW"/>
</dbReference>
<dbReference type="GO" id="GO:0005524">
    <property type="term" value="F:ATP binding"/>
    <property type="evidence" value="ECO:0007669"/>
    <property type="project" value="UniProtKB-UniRule"/>
</dbReference>
<dbReference type="GO" id="GO:0046933">
    <property type="term" value="F:proton-transporting ATP synthase activity, rotational mechanism"/>
    <property type="evidence" value="ECO:0007669"/>
    <property type="project" value="UniProtKB-UniRule"/>
</dbReference>
<dbReference type="CDD" id="cd12152">
    <property type="entry name" value="F1-ATPase_delta"/>
    <property type="match status" value="1"/>
</dbReference>
<dbReference type="FunFam" id="1.20.5.440:FF:000001">
    <property type="entry name" value="ATP synthase epsilon chain"/>
    <property type="match status" value="1"/>
</dbReference>
<dbReference type="FunFam" id="2.60.15.10:FF:000001">
    <property type="entry name" value="ATP synthase epsilon chain"/>
    <property type="match status" value="1"/>
</dbReference>
<dbReference type="Gene3D" id="1.20.5.440">
    <property type="entry name" value="ATP synthase delta/epsilon subunit, C-terminal domain"/>
    <property type="match status" value="1"/>
</dbReference>
<dbReference type="Gene3D" id="2.60.15.10">
    <property type="entry name" value="F0F1 ATP synthase delta/epsilon subunit, N-terminal"/>
    <property type="match status" value="1"/>
</dbReference>
<dbReference type="HAMAP" id="MF_00530">
    <property type="entry name" value="ATP_synth_epsil_bac"/>
    <property type="match status" value="1"/>
</dbReference>
<dbReference type="InterPro" id="IPR036794">
    <property type="entry name" value="ATP_F1_dsu/esu_C_sf"/>
</dbReference>
<dbReference type="InterPro" id="IPR001469">
    <property type="entry name" value="ATP_synth_F1_dsu/esu"/>
</dbReference>
<dbReference type="InterPro" id="IPR020546">
    <property type="entry name" value="ATP_synth_F1_dsu/esu_N"/>
</dbReference>
<dbReference type="InterPro" id="IPR020547">
    <property type="entry name" value="ATP_synth_F1_esu_C"/>
</dbReference>
<dbReference type="InterPro" id="IPR036771">
    <property type="entry name" value="ATPsynth_dsu/esu_N"/>
</dbReference>
<dbReference type="NCBIfam" id="TIGR01216">
    <property type="entry name" value="ATP_synt_epsi"/>
    <property type="match status" value="1"/>
</dbReference>
<dbReference type="NCBIfam" id="NF001846">
    <property type="entry name" value="PRK00571.1-3"/>
    <property type="match status" value="1"/>
</dbReference>
<dbReference type="NCBIfam" id="NF009980">
    <property type="entry name" value="PRK13446.1"/>
    <property type="match status" value="1"/>
</dbReference>
<dbReference type="PANTHER" id="PTHR13822">
    <property type="entry name" value="ATP SYNTHASE DELTA/EPSILON CHAIN"/>
    <property type="match status" value="1"/>
</dbReference>
<dbReference type="PANTHER" id="PTHR13822:SF10">
    <property type="entry name" value="ATP SYNTHASE EPSILON CHAIN, CHLOROPLASTIC"/>
    <property type="match status" value="1"/>
</dbReference>
<dbReference type="Pfam" id="PF00401">
    <property type="entry name" value="ATP-synt_DE"/>
    <property type="match status" value="1"/>
</dbReference>
<dbReference type="Pfam" id="PF02823">
    <property type="entry name" value="ATP-synt_DE_N"/>
    <property type="match status" value="1"/>
</dbReference>
<dbReference type="SUPFAM" id="SSF46604">
    <property type="entry name" value="Epsilon subunit of F1F0-ATP synthase C-terminal domain"/>
    <property type="match status" value="1"/>
</dbReference>
<dbReference type="SUPFAM" id="SSF51344">
    <property type="entry name" value="Epsilon subunit of F1F0-ATP synthase N-terminal domain"/>
    <property type="match status" value="1"/>
</dbReference>